<protein>
    <recommendedName>
        <fullName>6-carboxy-5,6,7,8-tetrahydropterin synthase</fullName>
        <shortName>CPH4 synthase</shortName>
        <ecNumber>4.1.2.50</ecNumber>
    </recommendedName>
    <alternativeName>
        <fullName>Queuosine biosynthesis protein QueD</fullName>
    </alternativeName>
</protein>
<feature type="chain" id="PRO_0000057922" description="6-carboxy-5,6,7,8-tetrahydropterin synthase">
    <location>
        <begin position="1"/>
        <end position="121"/>
    </location>
</feature>
<feature type="active site" description="Proton acceptor" evidence="1">
    <location>
        <position position="27"/>
    </location>
</feature>
<feature type="active site" description="Charge relay system" evidence="1">
    <location>
        <position position="71"/>
    </location>
</feature>
<feature type="active site" description="Charge relay system" evidence="1">
    <location>
        <position position="110"/>
    </location>
</feature>
<feature type="binding site" evidence="1">
    <location>
        <position position="16"/>
    </location>
    <ligand>
        <name>Zn(2+)</name>
        <dbReference type="ChEBI" id="CHEBI:29105"/>
    </ligand>
</feature>
<feature type="binding site" evidence="1">
    <location>
        <position position="31"/>
    </location>
    <ligand>
        <name>Zn(2+)</name>
        <dbReference type="ChEBI" id="CHEBI:29105"/>
    </ligand>
</feature>
<feature type="binding site" evidence="1">
    <location>
        <position position="33"/>
    </location>
    <ligand>
        <name>Zn(2+)</name>
        <dbReference type="ChEBI" id="CHEBI:29105"/>
    </ligand>
</feature>
<feature type="strand" evidence="4">
    <location>
        <begin position="3"/>
        <end position="16"/>
    </location>
</feature>
<feature type="helix" evidence="4">
    <location>
        <begin position="26"/>
        <end position="28"/>
    </location>
</feature>
<feature type="strand" evidence="4">
    <location>
        <begin position="29"/>
        <end position="42"/>
    </location>
</feature>
<feature type="turn" evidence="4">
    <location>
        <begin position="47"/>
        <end position="49"/>
    </location>
</feature>
<feature type="strand" evidence="4">
    <location>
        <begin position="50"/>
        <end position="53"/>
    </location>
</feature>
<feature type="helix" evidence="4">
    <location>
        <begin position="55"/>
        <end position="69"/>
    </location>
</feature>
<feature type="helix" evidence="4">
    <location>
        <begin position="74"/>
        <end position="76"/>
    </location>
</feature>
<feature type="helix" evidence="4">
    <location>
        <begin position="85"/>
        <end position="96"/>
    </location>
</feature>
<feature type="turn" evidence="4">
    <location>
        <begin position="97"/>
        <end position="99"/>
    </location>
</feature>
<feature type="strand" evidence="4">
    <location>
        <begin position="103"/>
        <end position="111"/>
    </location>
</feature>
<feature type="strand" evidence="4">
    <location>
        <begin position="114"/>
        <end position="119"/>
    </location>
</feature>
<proteinExistence type="evidence at protein level"/>
<evidence type="ECO:0000250" key="1"/>
<evidence type="ECO:0000269" key="2">
    <source>
    </source>
</evidence>
<evidence type="ECO:0000305" key="3"/>
<evidence type="ECO:0007829" key="4">
    <source>
        <dbReference type="PDB" id="4NTK"/>
    </source>
</evidence>
<comment type="function">
    <text evidence="2">Catalyzes the conversion of 7,8-dihydroneopterin triphosphate (H2NTP) to 6-carboxy-5,6,7,8-tetrahydropterin (CPH4) and acetaldehyde. Can also convert 6-pyruvoyltetrahydropterin (PPH4) and sepiapterin to CPH4; these 2 compounds are probably intermediates in the reaction from H2NTP.</text>
</comment>
<comment type="catalytic activity">
    <reaction evidence="2">
        <text>7,8-dihydroneopterin 3'-triphosphate + H2O = 6-carboxy-5,6,7,8-tetrahydropterin + triphosphate + acetaldehyde + 2 H(+)</text>
        <dbReference type="Rhea" id="RHEA:27966"/>
        <dbReference type="ChEBI" id="CHEBI:15343"/>
        <dbReference type="ChEBI" id="CHEBI:15377"/>
        <dbReference type="ChEBI" id="CHEBI:15378"/>
        <dbReference type="ChEBI" id="CHEBI:18036"/>
        <dbReference type="ChEBI" id="CHEBI:58462"/>
        <dbReference type="ChEBI" id="CHEBI:61032"/>
        <dbReference type="EC" id="4.1.2.50"/>
    </reaction>
</comment>
<comment type="cofactor">
    <cofactor evidence="2">
        <name>Zn(2+)</name>
        <dbReference type="ChEBI" id="CHEBI:29105"/>
    </cofactor>
    <text evidence="2">Binds 1 zinc ion per subunit.</text>
</comment>
<comment type="pathway">
    <text>Purine metabolism; 7-cyano-7-deazaguanine biosynthesis.</text>
</comment>
<comment type="miscellaneous">
    <text evidence="1">The active site is at the interface between 2 subunits. The proton acceptor Cys is on one subunit, and the charge relay system is on the other subunit (By similarity).</text>
</comment>
<comment type="similarity">
    <text evidence="3">Belongs to the PTPS family. QueD subfamily.</text>
</comment>
<keyword id="KW-0002">3D-structure</keyword>
<keyword id="KW-0456">Lyase</keyword>
<keyword id="KW-0479">Metal-binding</keyword>
<keyword id="KW-0671">Queuosine biosynthesis</keyword>
<keyword id="KW-1185">Reference proteome</keyword>
<keyword id="KW-0862">Zinc</keyword>
<reference key="1">
    <citation type="journal article" date="1997" name="Science">
        <title>The complete genome sequence of Escherichia coli K-12.</title>
        <authorList>
            <person name="Blattner F.R."/>
            <person name="Plunkett G. III"/>
            <person name="Bloch C.A."/>
            <person name="Perna N.T."/>
            <person name="Burland V."/>
            <person name="Riley M."/>
            <person name="Collado-Vides J."/>
            <person name="Glasner J.D."/>
            <person name="Rode C.K."/>
            <person name="Mayhew G.F."/>
            <person name="Gregor J."/>
            <person name="Davis N.W."/>
            <person name="Kirkpatrick H.A."/>
            <person name="Goeden M.A."/>
            <person name="Rose D.J."/>
            <person name="Mau B."/>
            <person name="Shao Y."/>
        </authorList>
    </citation>
    <scope>NUCLEOTIDE SEQUENCE [LARGE SCALE GENOMIC DNA]</scope>
    <source>
        <strain>K12 / MG1655 / ATCC 47076</strain>
    </source>
</reference>
<reference key="2">
    <citation type="journal article" date="2006" name="Mol. Syst. Biol.">
        <title>Highly accurate genome sequences of Escherichia coli K-12 strains MG1655 and W3110.</title>
        <authorList>
            <person name="Hayashi K."/>
            <person name="Morooka N."/>
            <person name="Yamamoto Y."/>
            <person name="Fujita K."/>
            <person name="Isono K."/>
            <person name="Choi S."/>
            <person name="Ohtsubo E."/>
            <person name="Baba T."/>
            <person name="Wanner B.L."/>
            <person name="Mori H."/>
            <person name="Horiuchi T."/>
        </authorList>
    </citation>
    <scope>NUCLEOTIDE SEQUENCE [LARGE SCALE GENOMIC DNA]</scope>
    <source>
        <strain>K12 / W3110 / ATCC 27325 / DSM 5911</strain>
    </source>
</reference>
<reference key="3">
    <citation type="journal article" date="2009" name="Biochemistry">
        <title>Escherichia coli QueD is a 6-carboxy-5,6,7,8-tetrahydropterin synthase.</title>
        <authorList>
            <person name="McCarty R.M."/>
            <person name="Somogyi A."/>
            <person name="Bandarian V."/>
        </authorList>
    </citation>
    <scope>FUNCTION AS A CPH4 SYNTHASE</scope>
    <scope>CATALYTIC ACTIVITY</scope>
    <scope>COFACTOR</scope>
    <scope>REACTION MECHANISM</scope>
</reference>
<accession>P65870</accession>
<accession>Q2MA64</accession>
<accession>Q46903</accession>
<name>QUED_ECOLI</name>
<organism>
    <name type="scientific">Escherichia coli (strain K12)</name>
    <dbReference type="NCBI Taxonomy" id="83333"/>
    <lineage>
        <taxon>Bacteria</taxon>
        <taxon>Pseudomonadati</taxon>
        <taxon>Pseudomonadota</taxon>
        <taxon>Gammaproteobacteria</taxon>
        <taxon>Enterobacterales</taxon>
        <taxon>Enterobacteriaceae</taxon>
        <taxon>Escherichia</taxon>
    </lineage>
</organism>
<dbReference type="EC" id="4.1.2.50"/>
<dbReference type="EMBL" id="U29579">
    <property type="protein sequence ID" value="AAA69275.1"/>
    <property type="molecule type" value="Genomic_DNA"/>
</dbReference>
<dbReference type="EMBL" id="U00096">
    <property type="protein sequence ID" value="AAC75807.1"/>
    <property type="molecule type" value="Genomic_DNA"/>
</dbReference>
<dbReference type="EMBL" id="AP009048">
    <property type="protein sequence ID" value="BAE76842.1"/>
    <property type="molecule type" value="Genomic_DNA"/>
</dbReference>
<dbReference type="PIR" id="A65058">
    <property type="entry name" value="A65058"/>
</dbReference>
<dbReference type="RefSeq" id="NP_417245.1">
    <property type="nucleotide sequence ID" value="NC_000913.3"/>
</dbReference>
<dbReference type="PDB" id="3QN0">
    <property type="method" value="X-ray"/>
    <property type="resolution" value="2.34 A"/>
    <property type="chains" value="A/B/C/D/E/F=1-121"/>
</dbReference>
<dbReference type="PDB" id="3QN9">
    <property type="method" value="X-ray"/>
    <property type="resolution" value="2.93 A"/>
    <property type="chains" value="A/B=1-121"/>
</dbReference>
<dbReference type="PDB" id="3QNA">
    <property type="method" value="X-ray"/>
    <property type="resolution" value="2.50 A"/>
    <property type="chains" value="A/B/C/D/E/F=1-121"/>
</dbReference>
<dbReference type="PDB" id="4NTK">
    <property type="method" value="X-ray"/>
    <property type="resolution" value="1.60 A"/>
    <property type="chains" value="A/B/C/D/E/F=1-121"/>
</dbReference>
<dbReference type="PDB" id="4NTM">
    <property type="method" value="X-ray"/>
    <property type="resolution" value="2.05 A"/>
    <property type="chains" value="A/B/C/D/E/F=1-121"/>
</dbReference>
<dbReference type="PDB" id="4NTN">
    <property type="method" value="X-ray"/>
    <property type="resolution" value="1.99 A"/>
    <property type="chains" value="A/B/C/D/E/F=1-121"/>
</dbReference>
<dbReference type="PDBsum" id="3QN0"/>
<dbReference type="PDBsum" id="3QN9"/>
<dbReference type="PDBsum" id="3QNA"/>
<dbReference type="PDBsum" id="4NTK"/>
<dbReference type="PDBsum" id="4NTM"/>
<dbReference type="PDBsum" id="4NTN"/>
<dbReference type="SMR" id="P65870"/>
<dbReference type="BioGRID" id="4262288">
    <property type="interactions" value="24"/>
</dbReference>
<dbReference type="FunCoup" id="P65870">
    <property type="interactions" value="330"/>
</dbReference>
<dbReference type="IntAct" id="P65870">
    <property type="interactions" value="3"/>
</dbReference>
<dbReference type="STRING" id="511145.b2765"/>
<dbReference type="jPOST" id="P65870"/>
<dbReference type="PaxDb" id="511145-b2765"/>
<dbReference type="EnsemblBacteria" id="AAC75807">
    <property type="protein sequence ID" value="AAC75807"/>
    <property type="gene ID" value="b2765"/>
</dbReference>
<dbReference type="GeneID" id="945123"/>
<dbReference type="KEGG" id="ecj:JW2735"/>
<dbReference type="KEGG" id="eco:b2765"/>
<dbReference type="PATRIC" id="fig|1411691.4.peg.3972"/>
<dbReference type="EchoBASE" id="EB2921"/>
<dbReference type="eggNOG" id="COG0720">
    <property type="taxonomic scope" value="Bacteria"/>
</dbReference>
<dbReference type="HOGENOM" id="CLU_111016_6_1_6"/>
<dbReference type="InParanoid" id="P65870"/>
<dbReference type="OMA" id="CTSGCIY"/>
<dbReference type="OrthoDB" id="9804698at2"/>
<dbReference type="PhylomeDB" id="P65870"/>
<dbReference type="BioCyc" id="EcoCyc:G7431-MONOMER"/>
<dbReference type="BioCyc" id="MetaCyc:G7431-MONOMER"/>
<dbReference type="BRENDA" id="4.1.2.50">
    <property type="organism ID" value="2026"/>
</dbReference>
<dbReference type="UniPathway" id="UPA00391"/>
<dbReference type="EvolutionaryTrace" id="P65870"/>
<dbReference type="PRO" id="PR:P65870"/>
<dbReference type="Proteomes" id="UP000000625">
    <property type="component" value="Chromosome"/>
</dbReference>
<dbReference type="GO" id="GO:0070497">
    <property type="term" value="F:6-carboxytetrahydropterin synthase activity"/>
    <property type="evidence" value="ECO:0000314"/>
    <property type="project" value="EcoCyc"/>
</dbReference>
<dbReference type="GO" id="GO:0042802">
    <property type="term" value="F:identical protein binding"/>
    <property type="evidence" value="ECO:0000314"/>
    <property type="project" value="EcoCyc"/>
</dbReference>
<dbReference type="GO" id="GO:0008270">
    <property type="term" value="F:zinc ion binding"/>
    <property type="evidence" value="ECO:0000314"/>
    <property type="project" value="EcoCyc"/>
</dbReference>
<dbReference type="GO" id="GO:0008616">
    <property type="term" value="P:queuosine biosynthetic process"/>
    <property type="evidence" value="ECO:0000315"/>
    <property type="project" value="EcoCyc"/>
</dbReference>
<dbReference type="FunFam" id="3.30.479.10:FF:000001">
    <property type="entry name" value="6-carboxy-5,6,7,8-tetrahydropterin synthase"/>
    <property type="match status" value="1"/>
</dbReference>
<dbReference type="Gene3D" id="3.30.479.10">
    <property type="entry name" value="6-pyruvoyl tetrahydropterin synthase/QueD"/>
    <property type="match status" value="1"/>
</dbReference>
<dbReference type="InterPro" id="IPR007115">
    <property type="entry name" value="6-PTP_synth/QueD"/>
</dbReference>
<dbReference type="InterPro" id="IPR038418">
    <property type="entry name" value="6-PTP_synth/QueD_sf"/>
</dbReference>
<dbReference type="NCBIfam" id="TIGR00039">
    <property type="entry name" value="6PTHBS"/>
    <property type="match status" value="1"/>
</dbReference>
<dbReference type="NCBIfam" id="TIGR03367">
    <property type="entry name" value="queuosine_QueD"/>
    <property type="match status" value="1"/>
</dbReference>
<dbReference type="PANTHER" id="PTHR12589:SF7">
    <property type="entry name" value="6-PYRUVOYL TETRAHYDROBIOPTERIN SYNTHASE"/>
    <property type="match status" value="1"/>
</dbReference>
<dbReference type="PANTHER" id="PTHR12589">
    <property type="entry name" value="PYRUVOYL TETRAHYDROBIOPTERIN SYNTHASE"/>
    <property type="match status" value="1"/>
</dbReference>
<dbReference type="Pfam" id="PF01242">
    <property type="entry name" value="PTPS"/>
    <property type="match status" value="1"/>
</dbReference>
<dbReference type="PIRSF" id="PIRSF006113">
    <property type="entry name" value="PTP_synth"/>
    <property type="match status" value="1"/>
</dbReference>
<dbReference type="SUPFAM" id="SSF55620">
    <property type="entry name" value="Tetrahydrobiopterin biosynthesis enzymes-like"/>
    <property type="match status" value="1"/>
</dbReference>
<gene>
    <name type="primary">queD</name>
    <name type="synonym">ygcM</name>
    <name type="ordered locus">b2765</name>
    <name type="ordered locus">JW2735</name>
</gene>
<sequence>MMSTTLFKDFTFEAAHRLPHVPEGHKCGRLHGHSFMVRLEITGEVDPHTGWIIDFAELKAAFKPTYERLDHHYLNDIPGLENPTSEVLAKWIWDQVKPVVPLLSAVMVKETCTAGCIYRGE</sequence>